<reference key="1">
    <citation type="journal article" date="1998" name="Arch. Virol.">
        <title>Sequence analysis of the RNA polymerase gene of African horse sickness virus.</title>
        <authorList>
            <person name="Vreede F.T."/>
            <person name="Huismans H."/>
        </authorList>
    </citation>
    <scope>NUCLEOTIDE SEQUENCE [GENOMIC RNA]</scope>
    <source>
        <strain>Serotype 9</strain>
    </source>
</reference>
<gene>
    <name type="primary">Segment-1</name>
</gene>
<feature type="chain" id="PRO_0000222661" description="RNA-directed RNA polymerase">
    <location>
        <begin position="1"/>
        <end position="1305"/>
    </location>
</feature>
<feature type="domain" description="RdRp catalytic" evidence="1">
    <location>
        <begin position="563"/>
        <end position="814"/>
    </location>
</feature>
<sequence>MVITVQGADLVRRALNRLFKYGRIDGTKMYYEYYRYSSKMRETRRKKGTKYKTDDEFLERERDAGRLKLYDLQVIREASWEDLLYENVHTAELDIYVRSILKLEDLEPEEEFLRNYAVYDGVHPLKDFVEMRAKNEMQIFGDMPIKAWISVLMEISRETKHKPLGLMVASDFVGRFGSPFEQNFRDLSQINEYGYCYSSPLLFEMCVTESILEFNMWYRMREERIQSLKFGLEVIDPFKLIREFFEICLPHPKKINNTLRSPYSWFVKNWGIGCSRVKVLTSIGGEDRNSKEVFYTGYHETENLYSEIVLKSKFYRESLKQNMTKTEEAITYSQKLGNHGRTMPIFLKMLKAVYTTEFDPTKISHVILASLCLSIQTITGYGRAWVVNKSSDLEAQMKPSSDNYVQRVCDYTKNNFIKAYEEARRGGEEIVMPEDMYTSILRLAKNTSSGFSTSIDVFKRYGPNAKGGRGEKIQITSRIKALVIFTKGHEIFTPKNLALKYNTTEFFQTKGSRDVPIKSTRIVYSINLSILVPQLIVTLPLNEYFARAGGSTLPETQRMGGKIIVGDLEATGSRVMDAADTFRNSSDPLNLTIAIDYSEFDTHLTPYNFRNGMLDGIREAMRRYQHLRYEGYTLDELIEFGYGEGRVMNTLWNGKRRVFKVAFEDYVMLSDEDKVQGTFKPPIGVKPVKNIKICEELEKKADGRDLILVSPTDGSDLALINTHLSGENSTLIANSLHNLAIGTVIREEVKRIFGDDISFKSEQYVGDDTLFYTELRTRSVERFDSIVDTIFEVIKKSGHEASMSKTLIAPFSVEKTQTHAKQGIYIPQDRMMLVSSERRKDIEDVAGYLRSQVQTLTTKISRGFSHELAQIIFMMKSSIIGHRKLKRTIKDGGYRDRKYDDDKEDGFTLIMLRDPLIAFYPVEWNGFGAHPAAMNIIMTEDMFVDSVMRGECRAWMEPLVKLIDQSPPLWNETSADKRMIGTDSTMSFFSRMARPAVRTVLTNSEVGDAVRSLPLGDFSPFNISKTMMHSALLKEKNARSLLTPAYEMEYQKELQGWRPRQKKFLVTSNEMEITTNYMKMFNVGKIPLHGLALKFFPDVNLSKEFFLQKSVLGNRESPRARMSYVDRIDSILRGDVVMRGFITANTIINILEKLGHTHSASDLTTLFEIMNLSSSVAQRLSEYITTERVRFDAMKLSKRGICGDEFSMSLDVCTQTMVDRYIRAPTQFTKTELDAVNLYVAQHIMLDAATGLTPSRYDINVSGDERVRFKQRVARFNTHLPKMRMVKRLIETERLSARLVQNQFV</sequence>
<name>RDRP_AHSV</name>
<comment type="catalytic activity">
    <reaction evidence="1">
        <text>RNA(n) + a ribonucleoside 5'-triphosphate = RNA(n+1) + diphosphate</text>
        <dbReference type="Rhea" id="RHEA:21248"/>
        <dbReference type="Rhea" id="RHEA-COMP:14527"/>
        <dbReference type="Rhea" id="RHEA-COMP:17342"/>
        <dbReference type="ChEBI" id="CHEBI:33019"/>
        <dbReference type="ChEBI" id="CHEBI:61557"/>
        <dbReference type="ChEBI" id="CHEBI:140395"/>
        <dbReference type="EC" id="2.7.7.48"/>
    </reaction>
</comment>
<comment type="similarity">
    <text evidence="2">Belongs to the reoviridae RNA-directed RNA polymerase family.</text>
</comment>
<organism>
    <name type="scientific">African horse sickness virus</name>
    <name type="common">AHSV</name>
    <name type="synonym">Orbivirus alphaequi</name>
    <dbReference type="NCBI Taxonomy" id="40050"/>
    <lineage>
        <taxon>Viruses</taxon>
        <taxon>Riboviria</taxon>
        <taxon>Orthornavirae</taxon>
        <taxon>Duplornaviricota</taxon>
        <taxon>Resentoviricetes</taxon>
        <taxon>Reovirales</taxon>
        <taxon>Sedoreoviridae</taxon>
        <taxon>Orbivirus</taxon>
    </lineage>
</organism>
<keyword id="KW-0547">Nucleotide-binding</keyword>
<keyword id="KW-0548">Nucleotidyltransferase</keyword>
<keyword id="KW-0696">RNA-directed RNA polymerase</keyword>
<keyword id="KW-0808">Transferase</keyword>
<keyword id="KW-0693">Viral RNA replication</keyword>
<evidence type="ECO:0000255" key="1">
    <source>
        <dbReference type="PROSITE-ProRule" id="PRU00539"/>
    </source>
</evidence>
<evidence type="ECO:0000305" key="2"/>
<proteinExistence type="inferred from homology"/>
<protein>
    <recommendedName>
        <fullName>RNA-directed RNA polymerase</fullName>
        <ecNumber>2.7.7.48</ecNumber>
    </recommendedName>
    <alternativeName>
        <fullName>VP1</fullName>
    </alternativeName>
</protein>
<accession>O70695</accession>
<dbReference type="EC" id="2.7.7.48"/>
<dbReference type="EMBL" id="U94887">
    <property type="protein sequence ID" value="AAC40586.1"/>
    <property type="molecule type" value="Genomic_RNA"/>
</dbReference>
<dbReference type="SMR" id="O70695"/>
<dbReference type="KEGG" id="vg:2943147"/>
<dbReference type="Proteomes" id="UP000201896">
    <property type="component" value="Genome"/>
</dbReference>
<dbReference type="GO" id="GO:0000166">
    <property type="term" value="F:nucleotide binding"/>
    <property type="evidence" value="ECO:0007669"/>
    <property type="project" value="UniProtKB-KW"/>
</dbReference>
<dbReference type="GO" id="GO:0003723">
    <property type="term" value="F:RNA binding"/>
    <property type="evidence" value="ECO:0007669"/>
    <property type="project" value="InterPro"/>
</dbReference>
<dbReference type="GO" id="GO:0003968">
    <property type="term" value="F:RNA-directed RNA polymerase activity"/>
    <property type="evidence" value="ECO:0007669"/>
    <property type="project" value="UniProtKB-KW"/>
</dbReference>
<dbReference type="GO" id="GO:0006351">
    <property type="term" value="P:DNA-templated transcription"/>
    <property type="evidence" value="ECO:0007669"/>
    <property type="project" value="InterPro"/>
</dbReference>
<dbReference type="GO" id="GO:0019079">
    <property type="term" value="P:viral genome replication"/>
    <property type="evidence" value="ECO:0007669"/>
    <property type="project" value="InterPro"/>
</dbReference>
<dbReference type="InterPro" id="IPR043502">
    <property type="entry name" value="DNA/RNA_pol_sf"/>
</dbReference>
<dbReference type="InterPro" id="IPR007097">
    <property type="entry name" value="RNA-dir_pol_reovirus"/>
</dbReference>
<dbReference type="InterPro" id="IPR008723">
    <property type="entry name" value="RNA_pol_orbivir"/>
</dbReference>
<dbReference type="Pfam" id="PF05788">
    <property type="entry name" value="Orbi_VP1"/>
    <property type="match status" value="1"/>
</dbReference>
<dbReference type="PIRSF" id="PIRSF000821">
    <property type="entry name" value="RdRPol"/>
    <property type="match status" value="1"/>
</dbReference>
<dbReference type="SUPFAM" id="SSF56672">
    <property type="entry name" value="DNA/RNA polymerases"/>
    <property type="match status" value="1"/>
</dbReference>
<dbReference type="PROSITE" id="PS50523">
    <property type="entry name" value="RDRP_DSRNA_REO"/>
    <property type="match status" value="1"/>
</dbReference>